<feature type="chain" id="PRO_1000185752" description="Polyribonucleotide nucleotidyltransferase">
    <location>
        <begin position="1"/>
        <end position="714"/>
    </location>
</feature>
<feature type="domain" description="KH" evidence="1">
    <location>
        <begin position="556"/>
        <end position="615"/>
    </location>
</feature>
<feature type="domain" description="S1 motif" evidence="1">
    <location>
        <begin position="625"/>
        <end position="693"/>
    </location>
</feature>
<feature type="region of interest" description="Disordered" evidence="2">
    <location>
        <begin position="691"/>
        <end position="714"/>
    </location>
</feature>
<feature type="compositionally biased region" description="Basic and acidic residues" evidence="2">
    <location>
        <begin position="700"/>
        <end position="714"/>
    </location>
</feature>
<feature type="binding site" evidence="1">
    <location>
        <position position="489"/>
    </location>
    <ligand>
        <name>Mg(2+)</name>
        <dbReference type="ChEBI" id="CHEBI:18420"/>
    </ligand>
</feature>
<feature type="binding site" evidence="1">
    <location>
        <position position="495"/>
    </location>
    <ligand>
        <name>Mg(2+)</name>
        <dbReference type="ChEBI" id="CHEBI:18420"/>
    </ligand>
</feature>
<accession>C0M913</accession>
<sequence>MSKQTFTTTFAGKPLVVEVGQVAKRANGATVVRYGESTVLTAAVMSKKMSTGDFFPLQVNYEEKMYAAGKFPGGWMKREGRPSTDATLTARLIDRPIRPMFAEGFRNEVQVINTVLSYDEDASAPMAAMLGSSLALSISDIPFNGPIAGVQVAYVEGEFIINPDKAQQEASLLELTVAGTKDAINMVESGAKELPEAIMLEALLVGHKAIQELIAFQEEIVAAVGKEKAEVELLQVAADLQAEIIETYNADLQQAIQVEEKKAREAATEAVKERVIAAYEERYAADEEHDRIMRDVAEILEQMEHAEVRRLITEDKVRPDGRRVDEIRPLAAEIDFLPRVHGSGLFTRGQTQALSVLTLAPMGDTQIIDGLEPEYKKRFLHHYNFPQYSVGETGRYGAAGRREIGHGALGERALAQVLPSLEAFPYAIRLVAEVLESNGSSSQASICAGTLALMAAGVPIKAPVAGIAMGLISDGTNYTVLTDIQGLEDHFGDMDFKVAGTRQGITALQMDIKIEGITPQILEEALAQAKKARFEILDLIEATIAEPRPELAPTAPKIDTIKIDVDKIKVVIGKGGETIDKIIAETGVKIDIDEEGNVSIYSSDQDAINRAKEIIASLVREAKVGEVYHAKVVRIEKFGAFVNLFDKTDALVHISEIAWSRTTNVSDVLEIGEEVDVKVIKVDDKGRIDASMKALVPRPPKPEKSEAKKEGKHD</sequence>
<comment type="function">
    <text evidence="1">Involved in mRNA degradation. Catalyzes the phosphorolysis of single-stranded polyribonucleotides processively in the 3'- to 5'-direction.</text>
</comment>
<comment type="catalytic activity">
    <reaction evidence="1">
        <text>RNA(n+1) + phosphate = RNA(n) + a ribonucleoside 5'-diphosphate</text>
        <dbReference type="Rhea" id="RHEA:22096"/>
        <dbReference type="Rhea" id="RHEA-COMP:14527"/>
        <dbReference type="Rhea" id="RHEA-COMP:17342"/>
        <dbReference type="ChEBI" id="CHEBI:43474"/>
        <dbReference type="ChEBI" id="CHEBI:57930"/>
        <dbReference type="ChEBI" id="CHEBI:140395"/>
        <dbReference type="EC" id="2.7.7.8"/>
    </reaction>
</comment>
<comment type="cofactor">
    <cofactor evidence="1">
        <name>Mg(2+)</name>
        <dbReference type="ChEBI" id="CHEBI:18420"/>
    </cofactor>
</comment>
<comment type="subcellular location">
    <subcellularLocation>
        <location evidence="1">Cytoplasm</location>
    </subcellularLocation>
</comment>
<comment type="similarity">
    <text evidence="1">Belongs to the polyribonucleotide nucleotidyltransferase family.</text>
</comment>
<evidence type="ECO:0000255" key="1">
    <source>
        <dbReference type="HAMAP-Rule" id="MF_01595"/>
    </source>
</evidence>
<evidence type="ECO:0000256" key="2">
    <source>
        <dbReference type="SAM" id="MobiDB-lite"/>
    </source>
</evidence>
<proteinExistence type="inferred from homology"/>
<dbReference type="EC" id="2.7.7.8" evidence="1"/>
<dbReference type="EMBL" id="FM204883">
    <property type="protein sequence ID" value="CAW95251.1"/>
    <property type="molecule type" value="Genomic_DNA"/>
</dbReference>
<dbReference type="RefSeq" id="WP_012680145.1">
    <property type="nucleotide sequence ID" value="NC_012471.1"/>
</dbReference>
<dbReference type="SMR" id="C0M913"/>
<dbReference type="KEGG" id="seu:SEQ_1995"/>
<dbReference type="HOGENOM" id="CLU_004217_2_2_9"/>
<dbReference type="OrthoDB" id="9804305at2"/>
<dbReference type="Proteomes" id="UP000001365">
    <property type="component" value="Chromosome"/>
</dbReference>
<dbReference type="GO" id="GO:0005829">
    <property type="term" value="C:cytosol"/>
    <property type="evidence" value="ECO:0007669"/>
    <property type="project" value="TreeGrafter"/>
</dbReference>
<dbReference type="GO" id="GO:0000175">
    <property type="term" value="F:3'-5'-RNA exonuclease activity"/>
    <property type="evidence" value="ECO:0007669"/>
    <property type="project" value="TreeGrafter"/>
</dbReference>
<dbReference type="GO" id="GO:0000287">
    <property type="term" value="F:magnesium ion binding"/>
    <property type="evidence" value="ECO:0007669"/>
    <property type="project" value="UniProtKB-UniRule"/>
</dbReference>
<dbReference type="GO" id="GO:0004654">
    <property type="term" value="F:polyribonucleotide nucleotidyltransferase activity"/>
    <property type="evidence" value="ECO:0007669"/>
    <property type="project" value="UniProtKB-UniRule"/>
</dbReference>
<dbReference type="GO" id="GO:0003723">
    <property type="term" value="F:RNA binding"/>
    <property type="evidence" value="ECO:0007669"/>
    <property type="project" value="UniProtKB-UniRule"/>
</dbReference>
<dbReference type="GO" id="GO:0006402">
    <property type="term" value="P:mRNA catabolic process"/>
    <property type="evidence" value="ECO:0007669"/>
    <property type="project" value="UniProtKB-UniRule"/>
</dbReference>
<dbReference type="GO" id="GO:0006396">
    <property type="term" value="P:RNA processing"/>
    <property type="evidence" value="ECO:0007669"/>
    <property type="project" value="InterPro"/>
</dbReference>
<dbReference type="CDD" id="cd02393">
    <property type="entry name" value="KH-I_PNPase"/>
    <property type="match status" value="1"/>
</dbReference>
<dbReference type="CDD" id="cd11363">
    <property type="entry name" value="RNase_PH_PNPase_1"/>
    <property type="match status" value="1"/>
</dbReference>
<dbReference type="CDD" id="cd11364">
    <property type="entry name" value="RNase_PH_PNPase_2"/>
    <property type="match status" value="1"/>
</dbReference>
<dbReference type="FunFam" id="2.40.50.140:FF:000023">
    <property type="entry name" value="Polyribonucleotide nucleotidyltransferase"/>
    <property type="match status" value="1"/>
</dbReference>
<dbReference type="FunFam" id="3.30.1370.10:FF:000001">
    <property type="entry name" value="Polyribonucleotide nucleotidyltransferase"/>
    <property type="match status" value="1"/>
</dbReference>
<dbReference type="FunFam" id="3.30.230.70:FF:000001">
    <property type="entry name" value="Polyribonucleotide nucleotidyltransferase"/>
    <property type="match status" value="1"/>
</dbReference>
<dbReference type="FunFam" id="3.30.230.70:FF:000002">
    <property type="entry name" value="Polyribonucleotide nucleotidyltransferase"/>
    <property type="match status" value="1"/>
</dbReference>
<dbReference type="Gene3D" id="3.30.230.70">
    <property type="entry name" value="GHMP Kinase, N-terminal domain"/>
    <property type="match status" value="2"/>
</dbReference>
<dbReference type="Gene3D" id="3.30.1370.10">
    <property type="entry name" value="K Homology domain, type 1"/>
    <property type="match status" value="1"/>
</dbReference>
<dbReference type="Gene3D" id="2.40.50.140">
    <property type="entry name" value="Nucleic acid-binding proteins"/>
    <property type="match status" value="1"/>
</dbReference>
<dbReference type="HAMAP" id="MF_01595">
    <property type="entry name" value="PNPase"/>
    <property type="match status" value="1"/>
</dbReference>
<dbReference type="InterPro" id="IPR001247">
    <property type="entry name" value="ExoRNase_PH_dom1"/>
</dbReference>
<dbReference type="InterPro" id="IPR015847">
    <property type="entry name" value="ExoRNase_PH_dom2"/>
</dbReference>
<dbReference type="InterPro" id="IPR036345">
    <property type="entry name" value="ExoRNase_PH_dom2_sf"/>
</dbReference>
<dbReference type="InterPro" id="IPR004087">
    <property type="entry name" value="KH_dom"/>
</dbReference>
<dbReference type="InterPro" id="IPR004088">
    <property type="entry name" value="KH_dom_type_1"/>
</dbReference>
<dbReference type="InterPro" id="IPR036612">
    <property type="entry name" value="KH_dom_type_1_sf"/>
</dbReference>
<dbReference type="InterPro" id="IPR012340">
    <property type="entry name" value="NA-bd_OB-fold"/>
</dbReference>
<dbReference type="InterPro" id="IPR012162">
    <property type="entry name" value="PNPase"/>
</dbReference>
<dbReference type="InterPro" id="IPR027408">
    <property type="entry name" value="PNPase/RNase_PH_dom_sf"/>
</dbReference>
<dbReference type="InterPro" id="IPR015848">
    <property type="entry name" value="PNPase_PH_RNA-bd_bac/org-type"/>
</dbReference>
<dbReference type="InterPro" id="IPR036456">
    <property type="entry name" value="PNPase_PH_RNA-bd_sf"/>
</dbReference>
<dbReference type="InterPro" id="IPR020568">
    <property type="entry name" value="Ribosomal_Su5_D2-typ_SF"/>
</dbReference>
<dbReference type="InterPro" id="IPR003029">
    <property type="entry name" value="S1_domain"/>
</dbReference>
<dbReference type="NCBIfam" id="TIGR03591">
    <property type="entry name" value="polynuc_phos"/>
    <property type="match status" value="1"/>
</dbReference>
<dbReference type="NCBIfam" id="NF008805">
    <property type="entry name" value="PRK11824.1"/>
    <property type="match status" value="1"/>
</dbReference>
<dbReference type="PANTHER" id="PTHR11252">
    <property type="entry name" value="POLYRIBONUCLEOTIDE NUCLEOTIDYLTRANSFERASE"/>
    <property type="match status" value="1"/>
</dbReference>
<dbReference type="PANTHER" id="PTHR11252:SF0">
    <property type="entry name" value="POLYRIBONUCLEOTIDE NUCLEOTIDYLTRANSFERASE 1, MITOCHONDRIAL"/>
    <property type="match status" value="1"/>
</dbReference>
<dbReference type="Pfam" id="PF00013">
    <property type="entry name" value="KH_1"/>
    <property type="match status" value="1"/>
</dbReference>
<dbReference type="Pfam" id="PF03726">
    <property type="entry name" value="PNPase"/>
    <property type="match status" value="1"/>
</dbReference>
<dbReference type="Pfam" id="PF01138">
    <property type="entry name" value="RNase_PH"/>
    <property type="match status" value="2"/>
</dbReference>
<dbReference type="Pfam" id="PF03725">
    <property type="entry name" value="RNase_PH_C"/>
    <property type="match status" value="2"/>
</dbReference>
<dbReference type="Pfam" id="PF00575">
    <property type="entry name" value="S1"/>
    <property type="match status" value="1"/>
</dbReference>
<dbReference type="PIRSF" id="PIRSF005499">
    <property type="entry name" value="PNPase"/>
    <property type="match status" value="1"/>
</dbReference>
<dbReference type="SMART" id="SM00322">
    <property type="entry name" value="KH"/>
    <property type="match status" value="1"/>
</dbReference>
<dbReference type="SMART" id="SM00316">
    <property type="entry name" value="S1"/>
    <property type="match status" value="1"/>
</dbReference>
<dbReference type="SUPFAM" id="SSF54791">
    <property type="entry name" value="Eukaryotic type KH-domain (KH-domain type I)"/>
    <property type="match status" value="1"/>
</dbReference>
<dbReference type="SUPFAM" id="SSF50249">
    <property type="entry name" value="Nucleic acid-binding proteins"/>
    <property type="match status" value="1"/>
</dbReference>
<dbReference type="SUPFAM" id="SSF46915">
    <property type="entry name" value="Polynucleotide phosphorylase/guanosine pentaphosphate synthase (PNPase/GPSI), domain 3"/>
    <property type="match status" value="1"/>
</dbReference>
<dbReference type="SUPFAM" id="SSF55666">
    <property type="entry name" value="Ribonuclease PH domain 2-like"/>
    <property type="match status" value="2"/>
</dbReference>
<dbReference type="SUPFAM" id="SSF54211">
    <property type="entry name" value="Ribosomal protein S5 domain 2-like"/>
    <property type="match status" value="2"/>
</dbReference>
<dbReference type="PROSITE" id="PS50084">
    <property type="entry name" value="KH_TYPE_1"/>
    <property type="match status" value="1"/>
</dbReference>
<dbReference type="PROSITE" id="PS50126">
    <property type="entry name" value="S1"/>
    <property type="match status" value="1"/>
</dbReference>
<gene>
    <name evidence="1" type="primary">pnp</name>
    <name type="ordered locus">SEQ_1995</name>
</gene>
<protein>
    <recommendedName>
        <fullName evidence="1">Polyribonucleotide nucleotidyltransferase</fullName>
        <ecNumber evidence="1">2.7.7.8</ecNumber>
    </recommendedName>
    <alternativeName>
        <fullName evidence="1">Polynucleotide phosphorylase</fullName>
        <shortName evidence="1">PNPase</shortName>
    </alternativeName>
</protein>
<name>PNP_STRE4</name>
<keyword id="KW-0963">Cytoplasm</keyword>
<keyword id="KW-0460">Magnesium</keyword>
<keyword id="KW-0479">Metal-binding</keyword>
<keyword id="KW-0548">Nucleotidyltransferase</keyword>
<keyword id="KW-0694">RNA-binding</keyword>
<keyword id="KW-0808">Transferase</keyword>
<reference key="1">
    <citation type="journal article" date="2009" name="PLoS Pathog.">
        <title>Genomic evidence for the evolution of Streptococcus equi: host restriction, increased virulence, and genetic exchange with human pathogens.</title>
        <authorList>
            <person name="Holden M.T.G."/>
            <person name="Heather Z."/>
            <person name="Paillot R."/>
            <person name="Steward K.F."/>
            <person name="Webb K."/>
            <person name="Ainslie F."/>
            <person name="Jourdan T."/>
            <person name="Bason N.C."/>
            <person name="Holroyd N.E."/>
            <person name="Mungall K."/>
            <person name="Quail M.A."/>
            <person name="Sanders M."/>
            <person name="Simmonds M."/>
            <person name="Willey D."/>
            <person name="Brooks K."/>
            <person name="Aanensen D.M."/>
            <person name="Spratt B.G."/>
            <person name="Jolley K.A."/>
            <person name="Maiden M.C.J."/>
            <person name="Kehoe M."/>
            <person name="Chanter N."/>
            <person name="Bentley S.D."/>
            <person name="Robinson C."/>
            <person name="Maskell D.J."/>
            <person name="Parkhill J."/>
            <person name="Waller A.S."/>
        </authorList>
    </citation>
    <scope>NUCLEOTIDE SEQUENCE [LARGE SCALE GENOMIC DNA]</scope>
    <source>
        <strain>4047</strain>
    </source>
</reference>
<organism>
    <name type="scientific">Streptococcus equi subsp. equi (strain 4047)</name>
    <dbReference type="NCBI Taxonomy" id="553482"/>
    <lineage>
        <taxon>Bacteria</taxon>
        <taxon>Bacillati</taxon>
        <taxon>Bacillota</taxon>
        <taxon>Bacilli</taxon>
        <taxon>Lactobacillales</taxon>
        <taxon>Streptococcaceae</taxon>
        <taxon>Streptococcus</taxon>
    </lineage>
</organism>